<organism>
    <name type="scientific">Tomato spotted wilt virus (strain Brazilian Br-01)</name>
    <name type="common">TSWV</name>
    <dbReference type="NCBI Taxonomy" id="36413"/>
    <lineage>
        <taxon>Viruses</taxon>
        <taxon>Riboviria</taxon>
        <taxon>Orthornavirae</taxon>
        <taxon>Negarnaviricota</taxon>
        <taxon>Polyploviricotina</taxon>
        <taxon>Ellioviricetes</taxon>
        <taxon>Bunyavirales</taxon>
        <taxon>Tospoviridae</taxon>
        <taxon>Orthotospovirus</taxon>
        <taxon>Tomato spotted wilt virus</taxon>
    </lineage>
</organism>
<protein>
    <recommendedName>
        <fullName>Movement protein</fullName>
        <shortName>MVP</shortName>
    </recommendedName>
    <alternativeName>
        <fullName>Non-structural movement protein</fullName>
        <shortName>NSm</shortName>
    </alternativeName>
</protein>
<evidence type="ECO:0000256" key="1">
    <source>
        <dbReference type="SAM" id="MobiDB-lite"/>
    </source>
</evidence>
<evidence type="ECO:0000269" key="2">
    <source>
    </source>
</evidence>
<evidence type="ECO:0000269" key="3">
    <source>
    </source>
</evidence>
<evidence type="ECO:0000269" key="4">
    <source>
    </source>
</evidence>
<evidence type="ECO:0000269" key="5">
    <source>
    </source>
</evidence>
<evidence type="ECO:0000269" key="6">
    <source>
    </source>
</evidence>
<evidence type="ECO:0000269" key="7">
    <source>
    </source>
</evidence>
<evidence type="ECO:0000305" key="8"/>
<comment type="function">
    <text evidence="2 3 5 7">Viral movemement protein which is responsible for cell-to cell spread of viral genome. Increases the size exclusion limit (SEL) of plasmodesmata by forming tubules structures, thereby allowing viral ribonucleocapsids to spread directly to neighboring cells.</text>
</comment>
<comment type="subunit">
    <text evidence="4">Oligomerizes to form tubule structures through host plasmodesma. Interacts with host A.thaliana At4g26020 protein, which is involved in intra- and inter-cellular trafficking.</text>
</comment>
<comment type="subcellular location">
    <subcellularLocation>
        <location evidence="6">Host cell junction</location>
        <location evidence="6">Host plasmodesma</location>
    </subcellularLocation>
    <text>Colocalizes with viral nucleocapsid aggregates in host cytoplasm.</text>
</comment>
<comment type="similarity">
    <text evidence="8">Belongs to the tospovirus movement protein family.</text>
</comment>
<reference key="1">
    <citation type="journal article" date="1992" name="J. Gen. Virol.">
        <title>The nucleotide sequence of the M RNA segment of tomato spotted wilt virus, a bunyavirus with two ambisense RNA segments.</title>
        <authorList>
            <person name="Kormelink R."/>
            <person name="de Haan P."/>
            <person name="Meurs C."/>
            <person name="Peters D."/>
            <person name="Goldbach R."/>
        </authorList>
    </citation>
    <scope>NUCLEOTIDE SEQUENCE [GENOMIC RNA]</scope>
</reference>
<reference key="2">
    <citation type="journal article" date="1993" name="J. Gen. Virol.">
        <authorList>
            <person name="Kormelink R."/>
            <person name="de Haan P."/>
            <person name="Meurs C."/>
            <person name="Peters D."/>
            <person name="Goldbach R."/>
        </authorList>
    </citation>
    <scope>ERRATUM OF PUBMED:1431808</scope>
</reference>
<reference key="3">
    <citation type="journal article" date="1994" name="Virology">
        <title>Expression and subcellular location of the NSM protein of tomato spotted wilt virus (TSWV), a putative viral movement protein.</title>
        <authorList>
            <person name="Kormelink R."/>
            <person name="Storms M."/>
            <person name="Van Lent J."/>
            <person name="Peters D."/>
            <person name="Goldbach R."/>
        </authorList>
    </citation>
    <scope>CHARACTERIZATION</scope>
    <scope>SUBCELLULAR LOCATION</scope>
</reference>
<reference key="4">
    <citation type="journal article" date="1995" name="Virology">
        <title>The nonstructural NSm protein of tomato spotted wilt virus induces tubular structures in plant and insect cells.</title>
        <authorList>
            <person name="Storms M.M."/>
            <person name="Kormelink R."/>
            <person name="Peters D."/>
            <person name="Van Lent J.W."/>
            <person name="Goldbach R.W."/>
        </authorList>
    </citation>
    <scope>FUNCTION</scope>
</reference>
<reference key="5">
    <citation type="journal article" date="2000" name="J. Gen. Virol.">
        <title>The '30K' superfamily of viral movement proteins.</title>
        <authorList>
            <person name="Melcher U."/>
        </authorList>
    </citation>
    <scope>FUNCTION</scope>
</reference>
<reference key="6">
    <citation type="journal article" date="2005" name="Virology">
        <title>The tubule-forming NSm protein from Tomato spotted wilt virus complements cell-to-cell and long-distance movement of Tobacco mosaic virus hybrids.</title>
        <authorList>
            <person name="Lewandowski D.J."/>
            <person name="Adkins S."/>
        </authorList>
    </citation>
    <scope>FUNCTION</scope>
</reference>
<reference key="7">
    <citation type="journal article" date="2006" name="Mol. Plant Microbe Interact.">
        <title>At-4/1, an interactor of the Tomato spotted wilt virus movement protein, belongs to a new family of plant proteins capable of directed intra- and intercellular trafficking.</title>
        <authorList>
            <person name="Paape M."/>
            <person name="Solovyev A.G."/>
            <person name="Erokhina T.N."/>
            <person name="Minina E.A."/>
            <person name="Schepetilnikov M.V."/>
            <person name="Lesemann D.-E."/>
            <person name="Schiemann J."/>
            <person name="Morozov S.Y."/>
            <person name="Kellmann J.-W."/>
        </authorList>
    </citation>
    <scope>INTERACTION WITH HOST ARABIDOPSIS THALIANA AT4G26020 PROTEIN</scope>
</reference>
<reference key="8">
    <citation type="journal article" date="2009" name="Virology">
        <title>Identification of domains of the Tomato spotted wilt virus NSm protein involved in tubule formation, movement and symptomatology.</title>
        <authorList>
            <person name="Li W."/>
            <person name="Lewandowski D.J."/>
            <person name="Hilf M.E."/>
            <person name="Adkins S."/>
        </authorList>
    </citation>
    <scope>FUNCTION</scope>
</reference>
<name>MVP_TSWV1</name>
<feature type="chain" id="PRO_0000221987" description="Movement protein">
    <location>
        <begin position="1"/>
        <end position="301"/>
    </location>
</feature>
<feature type="region of interest" description="Disordered" evidence="1">
    <location>
        <begin position="1"/>
        <end position="22"/>
    </location>
</feature>
<feature type="region of interest" description="Essential for tubule formation and cell-to-cell movement">
    <location>
        <begin position="19"/>
        <end position="159"/>
    </location>
</feature>
<feature type="region of interest" description="Essential for tubule formation and cell-to-cell movement">
    <location>
        <begin position="209"/>
        <end position="283"/>
    </location>
</feature>
<feature type="region of interest" description="Disordered" evidence="1">
    <location>
        <begin position="282"/>
        <end position="301"/>
    </location>
</feature>
<feature type="region of interest" description="Essential for long-distance movement">
    <location>
        <begin position="284"/>
        <end position="288"/>
    </location>
</feature>
<accession>P36292</accession>
<gene>
    <name type="primary">NSM</name>
</gene>
<organismHost>
    <name type="scientific">Frankliniella occidentalis</name>
    <name type="common">Western flower thrips</name>
    <name type="synonym">Euthrips occidentalis</name>
    <dbReference type="NCBI Taxonomy" id="133901"/>
</organismHost>
<organismHost>
    <name type="scientific">Scirtothrips dorsalis</name>
    <name type="common">Chilli thrips</name>
    <dbReference type="NCBI Taxonomy" id="163899"/>
</organismHost>
<organismHost>
    <name type="scientific">Solanum lycopersicum</name>
    <name type="common">Tomato</name>
    <name type="synonym">Lycopersicon esculentum</name>
    <dbReference type="NCBI Taxonomy" id="4081"/>
</organismHost>
<organismHost>
    <name type="scientific">Thrips tabaci</name>
    <dbReference type="NCBI Taxonomy" id="161014"/>
</organismHost>
<dbReference type="EMBL" id="S48091">
    <property type="status" value="NOT_ANNOTATED_CDS"/>
    <property type="molecule type" value="Genomic_RNA"/>
</dbReference>
<dbReference type="PIR" id="JQ1927">
    <property type="entry name" value="JQ1927"/>
</dbReference>
<dbReference type="Proteomes" id="UP000006674">
    <property type="component" value="Genome"/>
</dbReference>
<dbReference type="GO" id="GO:0044219">
    <property type="term" value="C:host cell plasmodesma"/>
    <property type="evidence" value="ECO:0000314"/>
    <property type="project" value="UniProtKB"/>
</dbReference>
<dbReference type="GO" id="GO:0046740">
    <property type="term" value="P:transport of virus in host, cell to cell"/>
    <property type="evidence" value="ECO:0007669"/>
    <property type="project" value="UniProtKB-KW"/>
</dbReference>
<dbReference type="InterPro" id="IPR006889">
    <property type="entry name" value="Bunya_NSM"/>
</dbReference>
<dbReference type="InterPro" id="IPR000603">
    <property type="entry name" value="MPV"/>
</dbReference>
<dbReference type="Pfam" id="PF00803">
    <property type="entry name" value="3A"/>
    <property type="match status" value="1"/>
</dbReference>
<dbReference type="PIRSF" id="PIRSF003959">
    <property type="entry name" value="NS-M_TospoV"/>
    <property type="match status" value="1"/>
</dbReference>
<sequence length="301" mass="33564">MLTLFGNKRPSKSAGKDEGPLVSLAKHNGSVEVSKPWSSSDEKLALTKAMDASKGKILLNIEGTSSFGTYESDSIIESEGYDLSARMIVDTNHHISNWKNDLFVGNGKQNANKVIKICPTWDSRKQYMMISRIVIWVCPTIPNPTGKLVVALIDPNMPSGKQVILKGQGTITDPICFVFYLNWSIPKMNNTPENCCQLHLMCSQEYKKGVSFGSVMYSWTKEFGDSPRADKDKCMVIPLNRAIRARSQAFIEACKLIIPKCNSEKQIKKQLKELSSNLERSVEEEEEGISDSVAQLSFDEI</sequence>
<proteinExistence type="evidence at protein level"/>
<keyword id="KW-1031">Host cell junction</keyword>
<keyword id="KW-0945">Host-virus interaction</keyword>
<keyword id="KW-1185">Reference proteome</keyword>
<keyword id="KW-0813">Transport</keyword>
<keyword id="KW-0916">Viral movement protein</keyword>